<gene>
    <name evidence="1" type="primary">lpxD</name>
    <name type="ordered locus">Patl_1259</name>
</gene>
<keyword id="KW-0012">Acyltransferase</keyword>
<keyword id="KW-0441">Lipid A biosynthesis</keyword>
<keyword id="KW-0444">Lipid biosynthesis</keyword>
<keyword id="KW-0443">Lipid metabolism</keyword>
<keyword id="KW-0677">Repeat</keyword>
<keyword id="KW-0808">Transferase</keyword>
<dbReference type="EC" id="2.3.1.191" evidence="1"/>
<dbReference type="EMBL" id="CP000388">
    <property type="protein sequence ID" value="ABG39785.1"/>
    <property type="molecule type" value="Genomic_DNA"/>
</dbReference>
<dbReference type="RefSeq" id="WP_011574111.1">
    <property type="nucleotide sequence ID" value="NC_008228.1"/>
</dbReference>
<dbReference type="SMR" id="Q15WF3"/>
<dbReference type="STRING" id="342610.Patl_1259"/>
<dbReference type="KEGG" id="pat:Patl_1259"/>
<dbReference type="eggNOG" id="COG1044">
    <property type="taxonomic scope" value="Bacteria"/>
</dbReference>
<dbReference type="HOGENOM" id="CLU_049865_0_1_6"/>
<dbReference type="OrthoDB" id="9784739at2"/>
<dbReference type="UniPathway" id="UPA00973"/>
<dbReference type="Proteomes" id="UP000001981">
    <property type="component" value="Chromosome"/>
</dbReference>
<dbReference type="GO" id="GO:0016020">
    <property type="term" value="C:membrane"/>
    <property type="evidence" value="ECO:0007669"/>
    <property type="project" value="GOC"/>
</dbReference>
<dbReference type="GO" id="GO:0016410">
    <property type="term" value="F:N-acyltransferase activity"/>
    <property type="evidence" value="ECO:0007669"/>
    <property type="project" value="InterPro"/>
</dbReference>
<dbReference type="GO" id="GO:0009245">
    <property type="term" value="P:lipid A biosynthetic process"/>
    <property type="evidence" value="ECO:0007669"/>
    <property type="project" value="UniProtKB-UniRule"/>
</dbReference>
<dbReference type="CDD" id="cd03352">
    <property type="entry name" value="LbH_LpxD"/>
    <property type="match status" value="1"/>
</dbReference>
<dbReference type="FunFam" id="2.160.10.10:FF:000005">
    <property type="entry name" value="UDP-3-O-(3-hydroxymyristoyl)glucosamine N-acyltransferase"/>
    <property type="match status" value="1"/>
</dbReference>
<dbReference type="Gene3D" id="1.20.5.170">
    <property type="match status" value="1"/>
</dbReference>
<dbReference type="Gene3D" id="2.160.10.10">
    <property type="entry name" value="Hexapeptide repeat proteins"/>
    <property type="match status" value="1"/>
</dbReference>
<dbReference type="Gene3D" id="3.40.1390.10">
    <property type="entry name" value="MurE/MurF, N-terminal domain"/>
    <property type="match status" value="1"/>
</dbReference>
<dbReference type="HAMAP" id="MF_00523">
    <property type="entry name" value="LpxD"/>
    <property type="match status" value="1"/>
</dbReference>
<dbReference type="InterPro" id="IPR001451">
    <property type="entry name" value="Hexapep"/>
</dbReference>
<dbReference type="InterPro" id="IPR007691">
    <property type="entry name" value="LpxD"/>
</dbReference>
<dbReference type="InterPro" id="IPR011004">
    <property type="entry name" value="Trimer_LpxA-like_sf"/>
</dbReference>
<dbReference type="InterPro" id="IPR020573">
    <property type="entry name" value="UDP_GlcNAc_AcTrfase_non-rep"/>
</dbReference>
<dbReference type="NCBIfam" id="TIGR01853">
    <property type="entry name" value="lipid_A_lpxD"/>
    <property type="match status" value="1"/>
</dbReference>
<dbReference type="NCBIfam" id="NF002060">
    <property type="entry name" value="PRK00892.1"/>
    <property type="match status" value="1"/>
</dbReference>
<dbReference type="PANTHER" id="PTHR43378">
    <property type="entry name" value="UDP-3-O-ACYLGLUCOSAMINE N-ACYLTRANSFERASE"/>
    <property type="match status" value="1"/>
</dbReference>
<dbReference type="PANTHER" id="PTHR43378:SF2">
    <property type="entry name" value="UDP-3-O-ACYLGLUCOSAMINE N-ACYLTRANSFERASE 1, MITOCHONDRIAL-RELATED"/>
    <property type="match status" value="1"/>
</dbReference>
<dbReference type="Pfam" id="PF00132">
    <property type="entry name" value="Hexapep"/>
    <property type="match status" value="1"/>
</dbReference>
<dbReference type="Pfam" id="PF14602">
    <property type="entry name" value="Hexapep_2"/>
    <property type="match status" value="1"/>
</dbReference>
<dbReference type="Pfam" id="PF04613">
    <property type="entry name" value="LpxD"/>
    <property type="match status" value="1"/>
</dbReference>
<dbReference type="SUPFAM" id="SSF51161">
    <property type="entry name" value="Trimeric LpxA-like enzymes"/>
    <property type="match status" value="1"/>
</dbReference>
<dbReference type="PROSITE" id="PS00101">
    <property type="entry name" value="HEXAPEP_TRANSFERASES"/>
    <property type="match status" value="2"/>
</dbReference>
<accession>Q15WF3</accession>
<proteinExistence type="inferred from homology"/>
<protein>
    <recommendedName>
        <fullName evidence="1">UDP-3-O-acylglucosamine N-acyltransferase</fullName>
        <ecNumber evidence="1">2.3.1.191</ecNumber>
    </recommendedName>
</protein>
<reference key="1">
    <citation type="submission" date="2006-06" db="EMBL/GenBank/DDBJ databases">
        <title>Complete sequence of Pseudoalteromonas atlantica T6c.</title>
        <authorList>
            <consortium name="US DOE Joint Genome Institute"/>
            <person name="Copeland A."/>
            <person name="Lucas S."/>
            <person name="Lapidus A."/>
            <person name="Barry K."/>
            <person name="Detter J.C."/>
            <person name="Glavina del Rio T."/>
            <person name="Hammon N."/>
            <person name="Israni S."/>
            <person name="Dalin E."/>
            <person name="Tice H."/>
            <person name="Pitluck S."/>
            <person name="Saunders E."/>
            <person name="Brettin T."/>
            <person name="Bruce D."/>
            <person name="Han C."/>
            <person name="Tapia R."/>
            <person name="Gilna P."/>
            <person name="Schmutz J."/>
            <person name="Larimer F."/>
            <person name="Land M."/>
            <person name="Hauser L."/>
            <person name="Kyrpides N."/>
            <person name="Kim E."/>
            <person name="Karls A.C."/>
            <person name="Bartlett D."/>
            <person name="Higgins B.P."/>
            <person name="Richardson P."/>
        </authorList>
    </citation>
    <scope>NUCLEOTIDE SEQUENCE [LARGE SCALE GENOMIC DNA]</scope>
    <source>
        <strain>T6c / ATCC BAA-1087</strain>
    </source>
</reference>
<organism>
    <name type="scientific">Pseudoalteromonas atlantica (strain T6c / ATCC BAA-1087)</name>
    <dbReference type="NCBI Taxonomy" id="3042615"/>
    <lineage>
        <taxon>Bacteria</taxon>
        <taxon>Pseudomonadati</taxon>
        <taxon>Pseudomonadota</taxon>
        <taxon>Gammaproteobacteria</taxon>
        <taxon>Alteromonadales</taxon>
        <taxon>Alteromonadaceae</taxon>
        <taxon>Paraglaciecola</taxon>
    </lineage>
</organism>
<sequence length="344" mass="36170">MNQTVSLQQLADKIGASLHLTDGDSGETQIHSLSTLASAGNGQISFLSNSRYRSQLEKTAAQAVILKSEDLSHCQCSALVMDNPYVGFALAAQLLDSTPRSADGISPLAVIADDVELGDNVSIGAHAVIESGVKLADNVQIGPGCFIGKEVSVGANTKLWANVTLYHRVVLGQDCLIQSATVIGADGFGYANDKGRWVKIPQLGTVILGDRVEVGASSTIDRGALDDTIIGNGVIIDNQCQVAHNVIIGENTAIAGCTVVAGSVTIGRNCTIGGMVAINGHMEICDNVYITGMSMVTKAIDKPGVYSSGMPAIENREWRKNAVALRNLSTLNQRVKTLEKSHLK</sequence>
<feature type="chain" id="PRO_0000264411" description="UDP-3-O-acylglucosamine N-acyltransferase">
    <location>
        <begin position="1"/>
        <end position="344"/>
    </location>
</feature>
<feature type="active site" description="Proton acceptor" evidence="1">
    <location>
        <position position="244"/>
    </location>
</feature>
<evidence type="ECO:0000255" key="1">
    <source>
        <dbReference type="HAMAP-Rule" id="MF_00523"/>
    </source>
</evidence>
<name>LPXD_PSEA6</name>
<comment type="function">
    <text evidence="1">Catalyzes the N-acylation of UDP-3-O-acylglucosamine using 3-hydroxyacyl-ACP as the acyl donor. Is involved in the biosynthesis of lipid A, a phosphorylated glycolipid that anchors the lipopolysaccharide to the outer membrane of the cell.</text>
</comment>
<comment type="catalytic activity">
    <reaction evidence="1">
        <text>a UDP-3-O-[(3R)-3-hydroxyacyl]-alpha-D-glucosamine + a (3R)-hydroxyacyl-[ACP] = a UDP-2-N,3-O-bis[(3R)-3-hydroxyacyl]-alpha-D-glucosamine + holo-[ACP] + H(+)</text>
        <dbReference type="Rhea" id="RHEA:53836"/>
        <dbReference type="Rhea" id="RHEA-COMP:9685"/>
        <dbReference type="Rhea" id="RHEA-COMP:9945"/>
        <dbReference type="ChEBI" id="CHEBI:15378"/>
        <dbReference type="ChEBI" id="CHEBI:64479"/>
        <dbReference type="ChEBI" id="CHEBI:78827"/>
        <dbReference type="ChEBI" id="CHEBI:137740"/>
        <dbReference type="ChEBI" id="CHEBI:137748"/>
        <dbReference type="EC" id="2.3.1.191"/>
    </reaction>
</comment>
<comment type="pathway">
    <text evidence="1">Bacterial outer membrane biogenesis; LPS lipid A biosynthesis.</text>
</comment>
<comment type="subunit">
    <text evidence="1">Homotrimer.</text>
</comment>
<comment type="similarity">
    <text evidence="1">Belongs to the transferase hexapeptide repeat family. LpxD subfamily.</text>
</comment>